<feature type="chain" id="PRO_1000121919" description="Glutamate-1-semialdehyde 2,1-aminomutase">
    <location>
        <begin position="1"/>
        <end position="426"/>
    </location>
</feature>
<feature type="modified residue" description="N6-(pyridoxal phosphate)lysine" evidence="1">
    <location>
        <position position="265"/>
    </location>
</feature>
<reference key="1">
    <citation type="journal article" date="2009" name="BMC Genomics">
        <title>Pseudogene accumulation in the evolutionary histories of Salmonella enterica serovars Paratyphi A and Typhi.</title>
        <authorList>
            <person name="Holt K.E."/>
            <person name="Thomson N.R."/>
            <person name="Wain J."/>
            <person name="Langridge G.C."/>
            <person name="Hasan R."/>
            <person name="Bhutta Z.A."/>
            <person name="Quail M.A."/>
            <person name="Norbertczak H."/>
            <person name="Walker D."/>
            <person name="Simmonds M."/>
            <person name="White B."/>
            <person name="Bason N."/>
            <person name="Mungall K."/>
            <person name="Dougan G."/>
            <person name="Parkhill J."/>
        </authorList>
    </citation>
    <scope>NUCLEOTIDE SEQUENCE [LARGE SCALE GENOMIC DNA]</scope>
    <source>
        <strain>AKU_12601</strain>
    </source>
</reference>
<gene>
    <name evidence="1" type="primary">hemL</name>
    <name type="ordered locus">SSPA0201</name>
</gene>
<accession>B5BL82</accession>
<comment type="catalytic activity">
    <reaction evidence="1">
        <text>(S)-4-amino-5-oxopentanoate = 5-aminolevulinate</text>
        <dbReference type="Rhea" id="RHEA:14265"/>
        <dbReference type="ChEBI" id="CHEBI:57501"/>
        <dbReference type="ChEBI" id="CHEBI:356416"/>
        <dbReference type="EC" id="5.4.3.8"/>
    </reaction>
</comment>
<comment type="cofactor">
    <cofactor evidence="1">
        <name>pyridoxal 5'-phosphate</name>
        <dbReference type="ChEBI" id="CHEBI:597326"/>
    </cofactor>
</comment>
<comment type="pathway">
    <text evidence="1">Porphyrin-containing compound metabolism; protoporphyrin-IX biosynthesis; 5-aminolevulinate from L-glutamyl-tRNA(Glu): step 2/2.</text>
</comment>
<comment type="subunit">
    <text evidence="1">Homodimer.</text>
</comment>
<comment type="subcellular location">
    <subcellularLocation>
        <location evidence="1">Cytoplasm</location>
    </subcellularLocation>
</comment>
<comment type="similarity">
    <text evidence="1">Belongs to the class-III pyridoxal-phosphate-dependent aminotransferase family. HemL subfamily.</text>
</comment>
<sequence>MSKSENLYSAARELIPGGVNSPVRAFTGVGGTPLFIEKADGAYLYDVDGKAYIDYVGSWGPMVLGHNHPAIRNAVIEAAERGLSFGAPTEMEVKMAELVTNLVPTMDMVRMVNSGTEATMSAIRLARGFTGRDKIIKFEGCYHGHADCLLVKAGSGALTLGQPNSPGVPADFAKHTLTCTYNDLTSVRAAFEQYPQEIACIIVEPVAGNMNCVPPLPEFLPGLRALCDEFGALLIIDEVMTGFRVALAGAQDYYGVVPDLTCLGKIIGGGMPVGAFGGRRDVMDALAPTGPVYQAGTLSGNPIAMAAGFACLNEVAQPGIHETLDELTTRLAEGLCEAAQEAGIPLVVNHVGGMFGIFFTDAETVTCYQDVMACDVERFKRFFHLMLEEGVYLAPSAFEAGFMSVAHSEEDINNTIDAARRVFAKL</sequence>
<protein>
    <recommendedName>
        <fullName evidence="1">Glutamate-1-semialdehyde 2,1-aminomutase</fullName>
        <shortName evidence="1">GSA</shortName>
        <ecNumber evidence="1">5.4.3.8</ecNumber>
    </recommendedName>
    <alternativeName>
        <fullName evidence="1">Glutamate-1-semialdehyde aminotransferase</fullName>
        <shortName evidence="1">GSA-AT</shortName>
    </alternativeName>
</protein>
<keyword id="KW-0963">Cytoplasm</keyword>
<keyword id="KW-0413">Isomerase</keyword>
<keyword id="KW-0627">Porphyrin biosynthesis</keyword>
<keyword id="KW-0663">Pyridoxal phosphate</keyword>
<evidence type="ECO:0000255" key="1">
    <source>
        <dbReference type="HAMAP-Rule" id="MF_00375"/>
    </source>
</evidence>
<proteinExistence type="inferred from homology"/>
<dbReference type="EC" id="5.4.3.8" evidence="1"/>
<dbReference type="EMBL" id="FM200053">
    <property type="protein sequence ID" value="CAR58315.1"/>
    <property type="molecule type" value="Genomic_DNA"/>
</dbReference>
<dbReference type="RefSeq" id="WP_000045258.1">
    <property type="nucleotide sequence ID" value="NC_011147.1"/>
</dbReference>
<dbReference type="SMR" id="B5BL82"/>
<dbReference type="KEGG" id="sek:SSPA0201"/>
<dbReference type="HOGENOM" id="CLU_016922_1_5_6"/>
<dbReference type="UniPathway" id="UPA00251">
    <property type="reaction ID" value="UER00317"/>
</dbReference>
<dbReference type="Proteomes" id="UP000001869">
    <property type="component" value="Chromosome"/>
</dbReference>
<dbReference type="GO" id="GO:0005737">
    <property type="term" value="C:cytoplasm"/>
    <property type="evidence" value="ECO:0007669"/>
    <property type="project" value="UniProtKB-SubCell"/>
</dbReference>
<dbReference type="GO" id="GO:0042286">
    <property type="term" value="F:glutamate-1-semialdehyde 2,1-aminomutase activity"/>
    <property type="evidence" value="ECO:0007669"/>
    <property type="project" value="UniProtKB-UniRule"/>
</dbReference>
<dbReference type="GO" id="GO:0030170">
    <property type="term" value="F:pyridoxal phosphate binding"/>
    <property type="evidence" value="ECO:0007669"/>
    <property type="project" value="InterPro"/>
</dbReference>
<dbReference type="GO" id="GO:0008483">
    <property type="term" value="F:transaminase activity"/>
    <property type="evidence" value="ECO:0007669"/>
    <property type="project" value="InterPro"/>
</dbReference>
<dbReference type="GO" id="GO:0006782">
    <property type="term" value="P:protoporphyrinogen IX biosynthetic process"/>
    <property type="evidence" value="ECO:0007669"/>
    <property type="project" value="UniProtKB-UniRule"/>
</dbReference>
<dbReference type="CDD" id="cd00610">
    <property type="entry name" value="OAT_like"/>
    <property type="match status" value="1"/>
</dbReference>
<dbReference type="FunFam" id="3.40.640.10:FF:000021">
    <property type="entry name" value="Glutamate-1-semialdehyde 2,1-aminomutase"/>
    <property type="match status" value="1"/>
</dbReference>
<dbReference type="FunFam" id="3.90.1150.10:FF:000012">
    <property type="entry name" value="Glutamate-1-semialdehyde 2,1-aminomutase"/>
    <property type="match status" value="1"/>
</dbReference>
<dbReference type="Gene3D" id="3.90.1150.10">
    <property type="entry name" value="Aspartate Aminotransferase, domain 1"/>
    <property type="match status" value="1"/>
</dbReference>
<dbReference type="Gene3D" id="3.40.640.10">
    <property type="entry name" value="Type I PLP-dependent aspartate aminotransferase-like (Major domain)"/>
    <property type="match status" value="1"/>
</dbReference>
<dbReference type="HAMAP" id="MF_00375">
    <property type="entry name" value="HemL_aminotrans_3"/>
    <property type="match status" value="1"/>
</dbReference>
<dbReference type="InterPro" id="IPR004639">
    <property type="entry name" value="4pyrrol_synth_GluAld_NH2Trfase"/>
</dbReference>
<dbReference type="InterPro" id="IPR005814">
    <property type="entry name" value="Aminotrans_3"/>
</dbReference>
<dbReference type="InterPro" id="IPR049704">
    <property type="entry name" value="Aminotrans_3_PPA_site"/>
</dbReference>
<dbReference type="InterPro" id="IPR015424">
    <property type="entry name" value="PyrdxlP-dep_Trfase"/>
</dbReference>
<dbReference type="InterPro" id="IPR015421">
    <property type="entry name" value="PyrdxlP-dep_Trfase_major"/>
</dbReference>
<dbReference type="InterPro" id="IPR015422">
    <property type="entry name" value="PyrdxlP-dep_Trfase_small"/>
</dbReference>
<dbReference type="NCBIfam" id="TIGR00713">
    <property type="entry name" value="hemL"/>
    <property type="match status" value="1"/>
</dbReference>
<dbReference type="NCBIfam" id="NF000818">
    <property type="entry name" value="PRK00062.1"/>
    <property type="match status" value="1"/>
</dbReference>
<dbReference type="PANTHER" id="PTHR43713">
    <property type="entry name" value="GLUTAMATE-1-SEMIALDEHYDE 2,1-AMINOMUTASE"/>
    <property type="match status" value="1"/>
</dbReference>
<dbReference type="PANTHER" id="PTHR43713:SF3">
    <property type="entry name" value="GLUTAMATE-1-SEMIALDEHYDE 2,1-AMINOMUTASE 1, CHLOROPLASTIC-RELATED"/>
    <property type="match status" value="1"/>
</dbReference>
<dbReference type="Pfam" id="PF00202">
    <property type="entry name" value="Aminotran_3"/>
    <property type="match status" value="1"/>
</dbReference>
<dbReference type="SUPFAM" id="SSF53383">
    <property type="entry name" value="PLP-dependent transferases"/>
    <property type="match status" value="1"/>
</dbReference>
<dbReference type="PROSITE" id="PS00600">
    <property type="entry name" value="AA_TRANSFER_CLASS_3"/>
    <property type="match status" value="1"/>
</dbReference>
<organism>
    <name type="scientific">Salmonella paratyphi A (strain AKU_12601)</name>
    <dbReference type="NCBI Taxonomy" id="554290"/>
    <lineage>
        <taxon>Bacteria</taxon>
        <taxon>Pseudomonadati</taxon>
        <taxon>Pseudomonadota</taxon>
        <taxon>Gammaproteobacteria</taxon>
        <taxon>Enterobacterales</taxon>
        <taxon>Enterobacteriaceae</taxon>
        <taxon>Salmonella</taxon>
    </lineage>
</organism>
<name>GSA_SALPK</name>